<accession>A1V203</accession>
<evidence type="ECO:0000255" key="1">
    <source>
        <dbReference type="HAMAP-Rule" id="MF_00758"/>
    </source>
</evidence>
<comment type="similarity">
    <text evidence="1">Belongs to the UPF0301 (AlgH) family.</text>
</comment>
<proteinExistence type="inferred from homology"/>
<name>Y2716_BURMS</name>
<gene>
    <name type="ordered locus">BMASAVP1_A0916</name>
</gene>
<reference key="1">
    <citation type="journal article" date="2010" name="Genome Biol. Evol.">
        <title>Continuing evolution of Burkholderia mallei through genome reduction and large-scale rearrangements.</title>
        <authorList>
            <person name="Losada L."/>
            <person name="Ronning C.M."/>
            <person name="DeShazer D."/>
            <person name="Woods D."/>
            <person name="Fedorova N."/>
            <person name="Kim H.S."/>
            <person name="Shabalina S.A."/>
            <person name="Pearson T.R."/>
            <person name="Brinkac L."/>
            <person name="Tan P."/>
            <person name="Nandi T."/>
            <person name="Crabtree J."/>
            <person name="Badger J."/>
            <person name="Beckstrom-Sternberg S."/>
            <person name="Saqib M."/>
            <person name="Schutzer S.E."/>
            <person name="Keim P."/>
            <person name="Nierman W.C."/>
        </authorList>
    </citation>
    <scope>NUCLEOTIDE SEQUENCE [LARGE SCALE GENOMIC DNA]</scope>
    <source>
        <strain>SAVP1</strain>
    </source>
</reference>
<organism>
    <name type="scientific">Burkholderia mallei (strain SAVP1)</name>
    <dbReference type="NCBI Taxonomy" id="320388"/>
    <lineage>
        <taxon>Bacteria</taxon>
        <taxon>Pseudomonadati</taxon>
        <taxon>Pseudomonadota</taxon>
        <taxon>Betaproteobacteria</taxon>
        <taxon>Burkholderiales</taxon>
        <taxon>Burkholderiaceae</taxon>
        <taxon>Burkholderia</taxon>
        <taxon>pseudomallei group</taxon>
    </lineage>
</organism>
<dbReference type="EMBL" id="CP000526">
    <property type="protein sequence ID" value="ABM51612.1"/>
    <property type="molecule type" value="Genomic_DNA"/>
</dbReference>
<dbReference type="RefSeq" id="WP_004185441.1">
    <property type="nucleotide sequence ID" value="NC_008785.1"/>
</dbReference>
<dbReference type="SMR" id="A1V203"/>
<dbReference type="KEGG" id="bmv:BMASAVP1_A0916"/>
<dbReference type="HOGENOM" id="CLU_057596_1_0_4"/>
<dbReference type="GO" id="GO:0005829">
    <property type="term" value="C:cytosol"/>
    <property type="evidence" value="ECO:0007669"/>
    <property type="project" value="TreeGrafter"/>
</dbReference>
<dbReference type="Gene3D" id="3.40.1740.10">
    <property type="entry name" value="VC0467-like"/>
    <property type="match status" value="1"/>
</dbReference>
<dbReference type="HAMAP" id="MF_00758">
    <property type="entry name" value="UPF0301"/>
    <property type="match status" value="1"/>
</dbReference>
<dbReference type="InterPro" id="IPR003774">
    <property type="entry name" value="AlgH-like"/>
</dbReference>
<dbReference type="NCBIfam" id="NF001266">
    <property type="entry name" value="PRK00228.1-1"/>
    <property type="match status" value="1"/>
</dbReference>
<dbReference type="NCBIfam" id="NF001267">
    <property type="entry name" value="PRK00228.1-2"/>
    <property type="match status" value="1"/>
</dbReference>
<dbReference type="PANTHER" id="PTHR30327">
    <property type="entry name" value="UNCHARACTERIZED PROTEIN YQGE"/>
    <property type="match status" value="1"/>
</dbReference>
<dbReference type="PANTHER" id="PTHR30327:SF1">
    <property type="entry name" value="UPF0301 PROTEIN YQGE"/>
    <property type="match status" value="1"/>
</dbReference>
<dbReference type="Pfam" id="PF02622">
    <property type="entry name" value="DUF179"/>
    <property type="match status" value="1"/>
</dbReference>
<dbReference type="SUPFAM" id="SSF143456">
    <property type="entry name" value="VC0467-like"/>
    <property type="match status" value="1"/>
</dbReference>
<protein>
    <recommendedName>
        <fullName evidence="1">UPF0301 protein BMASAVP1_A0916</fullName>
    </recommendedName>
</protein>
<sequence>MSKSSDRINLTNQFLIAMPNMADPTFSGTVVYLCDHSERGALGLVINRPTDIDLESLFNRIDLKLEIEPLLHIPVYFGGPVQTERGFVLHEPVEGSAYNSSMTVEGGLEMTTSKDVLEAVATGTGPKRFLLTLGHAGWGAGQLEEEISKNGWLTVAADPRIVFDTPAEERFEAALGLLGVSSSMLSGEAGHA</sequence>
<feature type="chain" id="PRO_1000046647" description="UPF0301 protein BMASAVP1_A0916">
    <location>
        <begin position="1"/>
        <end position="192"/>
    </location>
</feature>